<reference key="1">
    <citation type="journal article" date="2014" name="Stand. Genomic Sci.">
        <title>Complete genome sequence of Anabaena variabilis ATCC 29413.</title>
        <authorList>
            <person name="Thiel T."/>
            <person name="Pratte B.S."/>
            <person name="Zhong J."/>
            <person name="Goodwin L."/>
            <person name="Copeland A."/>
            <person name="Lucas S."/>
            <person name="Han C."/>
            <person name="Pitluck S."/>
            <person name="Land M.L."/>
            <person name="Kyrpides N.C."/>
            <person name="Woyke T."/>
        </authorList>
    </citation>
    <scope>NUCLEOTIDE SEQUENCE [LARGE SCALE GENOMIC DNA]</scope>
    <source>
        <strain>ATCC 29413 / PCC 7937</strain>
    </source>
</reference>
<gene>
    <name evidence="1" type="primary">leuS</name>
    <name type="ordered locus">Ava_4936</name>
</gene>
<protein>
    <recommendedName>
        <fullName evidence="1">Leucine--tRNA ligase</fullName>
        <ecNumber evidence="1">6.1.1.4</ecNumber>
    </recommendedName>
    <alternativeName>
        <fullName evidence="1">Leucyl-tRNA synthetase</fullName>
        <shortName evidence="1">LeuRS</shortName>
    </alternativeName>
</protein>
<evidence type="ECO:0000255" key="1">
    <source>
        <dbReference type="HAMAP-Rule" id="MF_00049"/>
    </source>
</evidence>
<name>SYL_TRIV2</name>
<comment type="catalytic activity">
    <reaction evidence="1">
        <text>tRNA(Leu) + L-leucine + ATP = L-leucyl-tRNA(Leu) + AMP + diphosphate</text>
        <dbReference type="Rhea" id="RHEA:11688"/>
        <dbReference type="Rhea" id="RHEA-COMP:9613"/>
        <dbReference type="Rhea" id="RHEA-COMP:9622"/>
        <dbReference type="ChEBI" id="CHEBI:30616"/>
        <dbReference type="ChEBI" id="CHEBI:33019"/>
        <dbReference type="ChEBI" id="CHEBI:57427"/>
        <dbReference type="ChEBI" id="CHEBI:78442"/>
        <dbReference type="ChEBI" id="CHEBI:78494"/>
        <dbReference type="ChEBI" id="CHEBI:456215"/>
        <dbReference type="EC" id="6.1.1.4"/>
    </reaction>
</comment>
<comment type="subcellular location">
    <subcellularLocation>
        <location evidence="1">Cytoplasm</location>
    </subcellularLocation>
</comment>
<comment type="similarity">
    <text evidence="1">Belongs to the class-I aminoacyl-tRNA synthetase family.</text>
</comment>
<accession>Q3M3A3</accession>
<sequence length="872" mass="98513">MDSRYNPAILEEKWQKTWVELGLDKTQTQSNKPKFYALSMFPYPSGSLHMGHVRNYTITDVIARLKRMQGYRVLHPMGWDAFGLPAENAAIDRGVPPANWTYQNITQMRQQLQRLGLSIDWDSEVATCSPDYYKWTQWIFLQFLQAGLAYQKEAAVNWDPIDQTVLANEQVDNEGRSWRSGAIVERKLLRQWFLKITDYAEELLNDLDKLTGWPERVKLMQANWIGKSVGAYLEFPIVGSTEKIAVYTTRPDTVYGVSYVVLAPEHPLTKQVTSKTQQAVVDTFIQEVTNQSELERTAEDKPKRGVATGGKAINPFTGEEVPIWIADYVLYEYGTGAVMGVPAHDVRDFKFAQRYDLPIDFVIAAPDDVAGFDLSPTSETEEVTQVVQIEYNQAYTEPGILINSGAFTGMTSTDAKQAIVKYATEKGFGKERIQYRLRDWLISRQRYWGAPIPVIHCPNCGIVPVPDKDLPVILPEEVEFTGRGGSPLAQLESWVNVPCPTCGSPAKRETDTMDTFIDSSWYFLRFTDARNEAQVFESAKTNDWMPVDQYVGGIEHAILHLLYSRFFTKVLRDRGLLNFDEPFERLLTQGMVQGLTYFNPNKGGKDKWVPSHLVNPNDPRDPQTGEPLQRLYATMSKSKGNGVAPEDVIAKYGVDTARMFILFKAPPEKDLEWDEADVEGQFRFLNRVWRLVTDYVASGVNPKNKSGELSKSEKDLRRAIHSAIQSVTEDLEDEYQFNTAISELMKLSNALTDANGKDSRVYAEGIHTLVVLLAPFAPHIAEELWQLLGNSESVHTQTWPAFDPAALVADEITLVIQVNGKKRADIQVPSQADKAELEKYARESEVVQRHLEGKEIKKVIVVPGKLVNFVVG</sequence>
<feature type="chain" id="PRO_1000009289" description="Leucine--tRNA ligase">
    <location>
        <begin position="1"/>
        <end position="872"/>
    </location>
</feature>
<feature type="short sequence motif" description="'HIGH' region">
    <location>
        <begin position="42"/>
        <end position="52"/>
    </location>
</feature>
<feature type="short sequence motif" description="'KMSKS' region">
    <location>
        <begin position="634"/>
        <end position="638"/>
    </location>
</feature>
<feature type="binding site" evidence="1">
    <location>
        <position position="637"/>
    </location>
    <ligand>
        <name>ATP</name>
        <dbReference type="ChEBI" id="CHEBI:30616"/>
    </ligand>
</feature>
<proteinExistence type="inferred from homology"/>
<keyword id="KW-0030">Aminoacyl-tRNA synthetase</keyword>
<keyword id="KW-0067">ATP-binding</keyword>
<keyword id="KW-0963">Cytoplasm</keyword>
<keyword id="KW-0436">Ligase</keyword>
<keyword id="KW-0547">Nucleotide-binding</keyword>
<keyword id="KW-0648">Protein biosynthesis</keyword>
<dbReference type="EC" id="6.1.1.4" evidence="1"/>
<dbReference type="EMBL" id="CP000117">
    <property type="protein sequence ID" value="ABA24533.1"/>
    <property type="molecule type" value="Genomic_DNA"/>
</dbReference>
<dbReference type="SMR" id="Q3M3A3"/>
<dbReference type="STRING" id="240292.Ava_4936"/>
<dbReference type="KEGG" id="ava:Ava_4936"/>
<dbReference type="eggNOG" id="COG0495">
    <property type="taxonomic scope" value="Bacteria"/>
</dbReference>
<dbReference type="HOGENOM" id="CLU_004427_0_0_3"/>
<dbReference type="Proteomes" id="UP000002533">
    <property type="component" value="Chromosome"/>
</dbReference>
<dbReference type="GO" id="GO:0005829">
    <property type="term" value="C:cytosol"/>
    <property type="evidence" value="ECO:0007669"/>
    <property type="project" value="TreeGrafter"/>
</dbReference>
<dbReference type="GO" id="GO:0002161">
    <property type="term" value="F:aminoacyl-tRNA deacylase activity"/>
    <property type="evidence" value="ECO:0007669"/>
    <property type="project" value="InterPro"/>
</dbReference>
<dbReference type="GO" id="GO:0005524">
    <property type="term" value="F:ATP binding"/>
    <property type="evidence" value="ECO:0007669"/>
    <property type="project" value="UniProtKB-UniRule"/>
</dbReference>
<dbReference type="GO" id="GO:0004823">
    <property type="term" value="F:leucine-tRNA ligase activity"/>
    <property type="evidence" value="ECO:0007669"/>
    <property type="project" value="UniProtKB-UniRule"/>
</dbReference>
<dbReference type="GO" id="GO:0006429">
    <property type="term" value="P:leucyl-tRNA aminoacylation"/>
    <property type="evidence" value="ECO:0007669"/>
    <property type="project" value="UniProtKB-UniRule"/>
</dbReference>
<dbReference type="CDD" id="cd07958">
    <property type="entry name" value="Anticodon_Ia_Leu_BEm"/>
    <property type="match status" value="1"/>
</dbReference>
<dbReference type="CDD" id="cd00812">
    <property type="entry name" value="LeuRS_core"/>
    <property type="match status" value="1"/>
</dbReference>
<dbReference type="FunFam" id="3.10.20.590:FF:000001">
    <property type="entry name" value="Leucine--tRNA ligase"/>
    <property type="match status" value="1"/>
</dbReference>
<dbReference type="FunFam" id="3.40.50.620:FF:000003">
    <property type="entry name" value="Leucine--tRNA ligase"/>
    <property type="match status" value="1"/>
</dbReference>
<dbReference type="FunFam" id="1.10.730.10:FF:000011">
    <property type="entry name" value="Leucine--tRNA ligase chloroplastic/mitochondrial"/>
    <property type="match status" value="1"/>
</dbReference>
<dbReference type="FunFam" id="3.40.50.620:FF:000100">
    <property type="entry name" value="probable leucine--tRNA ligase, mitochondrial"/>
    <property type="match status" value="1"/>
</dbReference>
<dbReference type="Gene3D" id="3.40.50.620">
    <property type="entry name" value="HUPs"/>
    <property type="match status" value="2"/>
</dbReference>
<dbReference type="Gene3D" id="1.10.730.10">
    <property type="entry name" value="Isoleucyl-tRNA Synthetase, Domain 1"/>
    <property type="match status" value="1"/>
</dbReference>
<dbReference type="HAMAP" id="MF_00049_B">
    <property type="entry name" value="Leu_tRNA_synth_B"/>
    <property type="match status" value="1"/>
</dbReference>
<dbReference type="InterPro" id="IPR001412">
    <property type="entry name" value="aa-tRNA-synth_I_CS"/>
</dbReference>
<dbReference type="InterPro" id="IPR002300">
    <property type="entry name" value="aa-tRNA-synth_Ia"/>
</dbReference>
<dbReference type="InterPro" id="IPR002302">
    <property type="entry name" value="Leu-tRNA-ligase"/>
</dbReference>
<dbReference type="InterPro" id="IPR025709">
    <property type="entry name" value="Leu_tRNA-synth_edit"/>
</dbReference>
<dbReference type="InterPro" id="IPR013155">
    <property type="entry name" value="M/V/L/I-tRNA-synth_anticd-bd"/>
</dbReference>
<dbReference type="InterPro" id="IPR015413">
    <property type="entry name" value="Methionyl/Leucyl_tRNA_Synth"/>
</dbReference>
<dbReference type="InterPro" id="IPR014729">
    <property type="entry name" value="Rossmann-like_a/b/a_fold"/>
</dbReference>
<dbReference type="InterPro" id="IPR009080">
    <property type="entry name" value="tRNAsynth_Ia_anticodon-bd"/>
</dbReference>
<dbReference type="InterPro" id="IPR009008">
    <property type="entry name" value="Val/Leu/Ile-tRNA-synth_edit"/>
</dbReference>
<dbReference type="NCBIfam" id="TIGR00396">
    <property type="entry name" value="leuS_bact"/>
    <property type="match status" value="1"/>
</dbReference>
<dbReference type="PANTHER" id="PTHR43740:SF2">
    <property type="entry name" value="LEUCINE--TRNA LIGASE, MITOCHONDRIAL"/>
    <property type="match status" value="1"/>
</dbReference>
<dbReference type="PANTHER" id="PTHR43740">
    <property type="entry name" value="LEUCYL-TRNA SYNTHETASE"/>
    <property type="match status" value="1"/>
</dbReference>
<dbReference type="Pfam" id="PF08264">
    <property type="entry name" value="Anticodon_1"/>
    <property type="match status" value="1"/>
</dbReference>
<dbReference type="Pfam" id="PF00133">
    <property type="entry name" value="tRNA-synt_1"/>
    <property type="match status" value="2"/>
</dbReference>
<dbReference type="Pfam" id="PF13603">
    <property type="entry name" value="tRNA-synt_1_2"/>
    <property type="match status" value="1"/>
</dbReference>
<dbReference type="Pfam" id="PF09334">
    <property type="entry name" value="tRNA-synt_1g"/>
    <property type="match status" value="1"/>
</dbReference>
<dbReference type="PRINTS" id="PR00985">
    <property type="entry name" value="TRNASYNTHLEU"/>
</dbReference>
<dbReference type="SUPFAM" id="SSF47323">
    <property type="entry name" value="Anticodon-binding domain of a subclass of class I aminoacyl-tRNA synthetases"/>
    <property type="match status" value="1"/>
</dbReference>
<dbReference type="SUPFAM" id="SSF52374">
    <property type="entry name" value="Nucleotidylyl transferase"/>
    <property type="match status" value="1"/>
</dbReference>
<dbReference type="SUPFAM" id="SSF50677">
    <property type="entry name" value="ValRS/IleRS/LeuRS editing domain"/>
    <property type="match status" value="1"/>
</dbReference>
<dbReference type="PROSITE" id="PS00178">
    <property type="entry name" value="AA_TRNA_LIGASE_I"/>
    <property type="match status" value="1"/>
</dbReference>
<organism>
    <name type="scientific">Trichormus variabilis (strain ATCC 29413 / PCC 7937)</name>
    <name type="common">Anabaena variabilis</name>
    <dbReference type="NCBI Taxonomy" id="240292"/>
    <lineage>
        <taxon>Bacteria</taxon>
        <taxon>Bacillati</taxon>
        <taxon>Cyanobacteriota</taxon>
        <taxon>Cyanophyceae</taxon>
        <taxon>Nostocales</taxon>
        <taxon>Nostocaceae</taxon>
        <taxon>Trichormus</taxon>
    </lineage>
</organism>